<reference key="1">
    <citation type="journal article" date="2009" name="J. Bacteriol.">
        <title>Genome sequences of three Agrobacterium biovars help elucidate the evolution of multichromosome genomes in bacteria.</title>
        <authorList>
            <person name="Slater S.C."/>
            <person name="Goldman B.S."/>
            <person name="Goodner B."/>
            <person name="Setubal J.C."/>
            <person name="Farrand S.K."/>
            <person name="Nester E.W."/>
            <person name="Burr T.J."/>
            <person name="Banta L."/>
            <person name="Dickerman A.W."/>
            <person name="Paulsen I."/>
            <person name="Otten L."/>
            <person name="Suen G."/>
            <person name="Welch R."/>
            <person name="Almeida N.F."/>
            <person name="Arnold F."/>
            <person name="Burton O.T."/>
            <person name="Du Z."/>
            <person name="Ewing A."/>
            <person name="Godsy E."/>
            <person name="Heisel S."/>
            <person name="Houmiel K.L."/>
            <person name="Jhaveri J."/>
            <person name="Lu J."/>
            <person name="Miller N.M."/>
            <person name="Norton S."/>
            <person name="Chen Q."/>
            <person name="Phoolcharoen W."/>
            <person name="Ohlin V."/>
            <person name="Ondrusek D."/>
            <person name="Pride N."/>
            <person name="Stricklin S.L."/>
            <person name="Sun J."/>
            <person name="Wheeler C."/>
            <person name="Wilson L."/>
            <person name="Zhu H."/>
            <person name="Wood D.W."/>
        </authorList>
    </citation>
    <scope>NUCLEOTIDE SEQUENCE [LARGE SCALE GENOMIC DNA]</scope>
    <source>
        <strain>ATCC BAA-846 / DSM 112012 / S4</strain>
    </source>
</reference>
<dbReference type="EC" id="6.1.1.4" evidence="1"/>
<dbReference type="EMBL" id="CP000633">
    <property type="protein sequence ID" value="ACM38184.1"/>
    <property type="molecule type" value="Genomic_DNA"/>
</dbReference>
<dbReference type="RefSeq" id="WP_015917594.1">
    <property type="nucleotide sequence ID" value="NC_011989.1"/>
</dbReference>
<dbReference type="SMR" id="B9JV46"/>
<dbReference type="STRING" id="311402.Avi_4381"/>
<dbReference type="KEGG" id="avi:Avi_4381"/>
<dbReference type="eggNOG" id="COG0495">
    <property type="taxonomic scope" value="Bacteria"/>
</dbReference>
<dbReference type="HOGENOM" id="CLU_004427_0_0_5"/>
<dbReference type="Proteomes" id="UP000001596">
    <property type="component" value="Chromosome 1"/>
</dbReference>
<dbReference type="GO" id="GO:0005829">
    <property type="term" value="C:cytosol"/>
    <property type="evidence" value="ECO:0007669"/>
    <property type="project" value="TreeGrafter"/>
</dbReference>
<dbReference type="GO" id="GO:0002161">
    <property type="term" value="F:aminoacyl-tRNA deacylase activity"/>
    <property type="evidence" value="ECO:0007669"/>
    <property type="project" value="InterPro"/>
</dbReference>
<dbReference type="GO" id="GO:0005524">
    <property type="term" value="F:ATP binding"/>
    <property type="evidence" value="ECO:0007669"/>
    <property type="project" value="UniProtKB-UniRule"/>
</dbReference>
<dbReference type="GO" id="GO:0004823">
    <property type="term" value="F:leucine-tRNA ligase activity"/>
    <property type="evidence" value="ECO:0007669"/>
    <property type="project" value="UniProtKB-UniRule"/>
</dbReference>
<dbReference type="GO" id="GO:0006429">
    <property type="term" value="P:leucyl-tRNA aminoacylation"/>
    <property type="evidence" value="ECO:0007669"/>
    <property type="project" value="UniProtKB-UniRule"/>
</dbReference>
<dbReference type="CDD" id="cd07958">
    <property type="entry name" value="Anticodon_Ia_Leu_BEm"/>
    <property type="match status" value="1"/>
</dbReference>
<dbReference type="CDD" id="cd00812">
    <property type="entry name" value="LeuRS_core"/>
    <property type="match status" value="1"/>
</dbReference>
<dbReference type="FunFam" id="1.10.730.10:FF:000002">
    <property type="entry name" value="Leucine--tRNA ligase"/>
    <property type="match status" value="1"/>
</dbReference>
<dbReference type="FunFam" id="3.40.50.620:FF:000003">
    <property type="entry name" value="Leucine--tRNA ligase"/>
    <property type="match status" value="1"/>
</dbReference>
<dbReference type="Gene3D" id="2.20.28.290">
    <property type="match status" value="1"/>
</dbReference>
<dbReference type="Gene3D" id="3.10.20.590">
    <property type="match status" value="1"/>
</dbReference>
<dbReference type="Gene3D" id="3.40.50.620">
    <property type="entry name" value="HUPs"/>
    <property type="match status" value="2"/>
</dbReference>
<dbReference type="Gene3D" id="1.10.730.10">
    <property type="entry name" value="Isoleucyl-tRNA Synthetase, Domain 1"/>
    <property type="match status" value="1"/>
</dbReference>
<dbReference type="Gene3D" id="3.90.740.10">
    <property type="entry name" value="Valyl/Leucyl/Isoleucyl-tRNA synthetase, editing domain"/>
    <property type="match status" value="1"/>
</dbReference>
<dbReference type="HAMAP" id="MF_00049_B">
    <property type="entry name" value="Leu_tRNA_synth_B"/>
    <property type="match status" value="1"/>
</dbReference>
<dbReference type="InterPro" id="IPR001412">
    <property type="entry name" value="aa-tRNA-synth_I_CS"/>
</dbReference>
<dbReference type="InterPro" id="IPR002300">
    <property type="entry name" value="aa-tRNA-synth_Ia"/>
</dbReference>
<dbReference type="InterPro" id="IPR002302">
    <property type="entry name" value="Leu-tRNA-ligase"/>
</dbReference>
<dbReference type="InterPro" id="IPR025709">
    <property type="entry name" value="Leu_tRNA-synth_edit"/>
</dbReference>
<dbReference type="InterPro" id="IPR013155">
    <property type="entry name" value="M/V/L/I-tRNA-synth_anticd-bd"/>
</dbReference>
<dbReference type="InterPro" id="IPR015413">
    <property type="entry name" value="Methionyl/Leucyl_tRNA_Synth"/>
</dbReference>
<dbReference type="InterPro" id="IPR014729">
    <property type="entry name" value="Rossmann-like_a/b/a_fold"/>
</dbReference>
<dbReference type="InterPro" id="IPR009080">
    <property type="entry name" value="tRNAsynth_Ia_anticodon-bd"/>
</dbReference>
<dbReference type="InterPro" id="IPR009008">
    <property type="entry name" value="Val/Leu/Ile-tRNA-synth_edit"/>
</dbReference>
<dbReference type="NCBIfam" id="TIGR00396">
    <property type="entry name" value="leuS_bact"/>
    <property type="match status" value="1"/>
</dbReference>
<dbReference type="PANTHER" id="PTHR43740:SF2">
    <property type="entry name" value="LEUCINE--TRNA LIGASE, MITOCHONDRIAL"/>
    <property type="match status" value="1"/>
</dbReference>
<dbReference type="PANTHER" id="PTHR43740">
    <property type="entry name" value="LEUCYL-TRNA SYNTHETASE"/>
    <property type="match status" value="1"/>
</dbReference>
<dbReference type="Pfam" id="PF08264">
    <property type="entry name" value="Anticodon_1"/>
    <property type="match status" value="1"/>
</dbReference>
<dbReference type="Pfam" id="PF00133">
    <property type="entry name" value="tRNA-synt_1"/>
    <property type="match status" value="2"/>
</dbReference>
<dbReference type="Pfam" id="PF13603">
    <property type="entry name" value="tRNA-synt_1_2"/>
    <property type="match status" value="1"/>
</dbReference>
<dbReference type="Pfam" id="PF09334">
    <property type="entry name" value="tRNA-synt_1g"/>
    <property type="match status" value="1"/>
</dbReference>
<dbReference type="PRINTS" id="PR00985">
    <property type="entry name" value="TRNASYNTHLEU"/>
</dbReference>
<dbReference type="SUPFAM" id="SSF47323">
    <property type="entry name" value="Anticodon-binding domain of a subclass of class I aminoacyl-tRNA synthetases"/>
    <property type="match status" value="1"/>
</dbReference>
<dbReference type="SUPFAM" id="SSF52374">
    <property type="entry name" value="Nucleotidylyl transferase"/>
    <property type="match status" value="1"/>
</dbReference>
<dbReference type="SUPFAM" id="SSF50677">
    <property type="entry name" value="ValRS/IleRS/LeuRS editing domain"/>
    <property type="match status" value="1"/>
</dbReference>
<dbReference type="PROSITE" id="PS00178">
    <property type="entry name" value="AA_TRNA_LIGASE_I"/>
    <property type="match status" value="1"/>
</dbReference>
<feature type="chain" id="PRO_1000199171" description="Leucine--tRNA ligase">
    <location>
        <begin position="1"/>
        <end position="876"/>
    </location>
</feature>
<feature type="short sequence motif" description="'HIGH' region">
    <location>
        <begin position="43"/>
        <end position="53"/>
    </location>
</feature>
<feature type="short sequence motif" description="'KMSKS' region">
    <location>
        <begin position="632"/>
        <end position="636"/>
    </location>
</feature>
<feature type="binding site" evidence="1">
    <location>
        <position position="635"/>
    </location>
    <ligand>
        <name>ATP</name>
        <dbReference type="ChEBI" id="CHEBI:30616"/>
    </ligand>
</feature>
<name>SYL_ALLAM</name>
<organism>
    <name type="scientific">Allorhizobium ampelinum (strain ATCC BAA-846 / DSM 112012 / S4)</name>
    <name type="common">Agrobacterium vitis (strain S4)</name>
    <dbReference type="NCBI Taxonomy" id="311402"/>
    <lineage>
        <taxon>Bacteria</taxon>
        <taxon>Pseudomonadati</taxon>
        <taxon>Pseudomonadota</taxon>
        <taxon>Alphaproteobacteria</taxon>
        <taxon>Hyphomicrobiales</taxon>
        <taxon>Rhizobiaceae</taxon>
        <taxon>Rhizobium/Agrobacterium group</taxon>
        <taxon>Allorhizobium</taxon>
        <taxon>Allorhizobium ampelinum</taxon>
    </lineage>
</organism>
<keyword id="KW-0030">Aminoacyl-tRNA synthetase</keyword>
<keyword id="KW-0067">ATP-binding</keyword>
<keyword id="KW-0963">Cytoplasm</keyword>
<keyword id="KW-0436">Ligase</keyword>
<keyword id="KW-0547">Nucleotide-binding</keyword>
<keyword id="KW-0648">Protein biosynthesis</keyword>
<keyword id="KW-1185">Reference proteome</keyword>
<accession>B9JV46</accession>
<comment type="catalytic activity">
    <reaction evidence="1">
        <text>tRNA(Leu) + L-leucine + ATP = L-leucyl-tRNA(Leu) + AMP + diphosphate</text>
        <dbReference type="Rhea" id="RHEA:11688"/>
        <dbReference type="Rhea" id="RHEA-COMP:9613"/>
        <dbReference type="Rhea" id="RHEA-COMP:9622"/>
        <dbReference type="ChEBI" id="CHEBI:30616"/>
        <dbReference type="ChEBI" id="CHEBI:33019"/>
        <dbReference type="ChEBI" id="CHEBI:57427"/>
        <dbReference type="ChEBI" id="CHEBI:78442"/>
        <dbReference type="ChEBI" id="CHEBI:78494"/>
        <dbReference type="ChEBI" id="CHEBI:456215"/>
        <dbReference type="EC" id="6.1.1.4"/>
    </reaction>
</comment>
<comment type="subcellular location">
    <subcellularLocation>
        <location evidence="1">Cytoplasm</location>
    </subcellularLocation>
</comment>
<comment type="similarity">
    <text evidence="1">Belongs to the class-I aminoacyl-tRNA synthetase family.</text>
</comment>
<gene>
    <name evidence="1" type="primary">leuS</name>
    <name type="ordered locus">Avi_4381</name>
</gene>
<evidence type="ECO:0000255" key="1">
    <source>
        <dbReference type="HAMAP-Rule" id="MF_00049"/>
    </source>
</evidence>
<protein>
    <recommendedName>
        <fullName evidence="1">Leucine--tRNA ligase</fullName>
        <ecNumber evidence="1">6.1.1.4</ecNumber>
    </recommendedName>
    <alternativeName>
        <fullName evidence="1">Leucyl-tRNA synthetase</fullName>
        <shortName evidence="1">LeuRS</shortName>
    </alternativeName>
</protein>
<proteinExistence type="inferred from homology"/>
<sequence length="876" mass="97494">MSTERYNPRDAEPRWQEKWSEAKIFETDNNDPREKYYVLEMFPYPSGRIHIGHVRNYAMGDVVARYKRARGYNVLHPMGWDAFGMPAENAAMQNKVHPKDWTYQNIASMRAQLKSMGLSLDWSREFATCDVEYYQRQQYLFLDMMEKGLVYRKQSKVNWDPVDQTVLANEQVIDGRGWRSGALVEQRELTQWFFKITDFAQDLLDALDTLDHWPEKVRLMQKNWIGRSEGLAIRWEIAAGTGPQGFTDVQVYTTRPDTLFGASFLAIAADHPLAKALSETSSDIAAFCDECRRAGTSLAALETAEKKGLDTGIKVKHPLDPAWELPVYIANFVLMDYGTGAIFACPSGDQRDLDFARKYGLPVVPVVMPRDGDAASFTVGDTAYDGDGVMINSRFLDGLTTQEAFDVVAGKLTAAQLGNEPVAERRVNFRLRDWGVSRQRYWGCPIPVIHCDDCGVVPVPKQDLPVKLPDDVTFDVPGNPLDRHPTWRNVSCPCCGKAARRETDTMDTFVDSSWYYTRFTAPWEDKPTDPAVANHWLPVDQYIGGIEHAILHLLYSRFFTRAMRETGHVAVSEPFKGLFTQGMVVHETYRLGSGANGQWVAPADIRVEDVDGARRAFLLSSGEEVTIGSVEKMSKSKKNVIDPDDILGSYGADTARFFVLSDSPPDRDVIWSEAGIEGSHRFVQRLWRLVSEAADVLRTSASTPAKDGAGRAVSQAAHKTLQAVGADLDKLAFNKAVARIYELLNTLAAPLTQVASGNADTSFVAAVRNATEILIQIIAPMMPHLAEECWAVLGHSGMVSQADWPVFHAELVAENEVVMPVQINGKKKAELTIGRDADQNAVSQAVLDLDAVKAALQGQTPKKIIVVPQRIVNIVV</sequence>